<accession>A8ZVD2</accession>
<reference key="1">
    <citation type="submission" date="2007-10" db="EMBL/GenBank/DDBJ databases">
        <title>Complete sequence of Desulfococcus oleovorans Hxd3.</title>
        <authorList>
            <consortium name="US DOE Joint Genome Institute"/>
            <person name="Copeland A."/>
            <person name="Lucas S."/>
            <person name="Lapidus A."/>
            <person name="Barry K."/>
            <person name="Glavina del Rio T."/>
            <person name="Dalin E."/>
            <person name="Tice H."/>
            <person name="Pitluck S."/>
            <person name="Kiss H."/>
            <person name="Brettin T."/>
            <person name="Bruce D."/>
            <person name="Detter J.C."/>
            <person name="Han C."/>
            <person name="Schmutz J."/>
            <person name="Larimer F."/>
            <person name="Land M."/>
            <person name="Hauser L."/>
            <person name="Kyrpides N."/>
            <person name="Kim E."/>
            <person name="Wawrik B."/>
            <person name="Richardson P."/>
        </authorList>
    </citation>
    <scope>NUCLEOTIDE SEQUENCE [LARGE SCALE GENOMIC DNA]</scope>
    <source>
        <strain>DSM 6200 / JCM 39069 / Hxd3</strain>
    </source>
</reference>
<feature type="chain" id="PRO_1000134989" description="Imidazole glycerol phosphate synthase subunit HisF">
    <location>
        <begin position="1"/>
        <end position="259"/>
    </location>
</feature>
<feature type="active site" evidence="1">
    <location>
        <position position="11"/>
    </location>
</feature>
<feature type="active site" evidence="1">
    <location>
        <position position="130"/>
    </location>
</feature>
<evidence type="ECO:0000255" key="1">
    <source>
        <dbReference type="HAMAP-Rule" id="MF_01013"/>
    </source>
</evidence>
<protein>
    <recommendedName>
        <fullName evidence="1">Imidazole glycerol phosphate synthase subunit HisF</fullName>
        <ecNumber evidence="1">4.3.2.10</ecNumber>
    </recommendedName>
    <alternativeName>
        <fullName evidence="1">IGP synthase cyclase subunit</fullName>
    </alternativeName>
    <alternativeName>
        <fullName evidence="1">IGP synthase subunit HisF</fullName>
    </alternativeName>
    <alternativeName>
        <fullName evidence="1">ImGP synthase subunit HisF</fullName>
        <shortName evidence="1">IGPS subunit HisF</shortName>
    </alternativeName>
</protein>
<gene>
    <name evidence="1" type="primary">hisF</name>
    <name type="ordered locus">Dole_0783</name>
</gene>
<dbReference type="EC" id="4.3.2.10" evidence="1"/>
<dbReference type="EMBL" id="CP000859">
    <property type="protein sequence ID" value="ABW66593.1"/>
    <property type="molecule type" value="Genomic_DNA"/>
</dbReference>
<dbReference type="RefSeq" id="WP_012174211.1">
    <property type="nucleotide sequence ID" value="NC_009943.1"/>
</dbReference>
<dbReference type="SMR" id="A8ZVD2"/>
<dbReference type="STRING" id="96561.Dole_0783"/>
<dbReference type="KEGG" id="dol:Dole_0783"/>
<dbReference type="eggNOG" id="COG0107">
    <property type="taxonomic scope" value="Bacteria"/>
</dbReference>
<dbReference type="HOGENOM" id="CLU_048577_4_0_7"/>
<dbReference type="OrthoDB" id="9807749at2"/>
<dbReference type="UniPathway" id="UPA00031">
    <property type="reaction ID" value="UER00010"/>
</dbReference>
<dbReference type="Proteomes" id="UP000008561">
    <property type="component" value="Chromosome"/>
</dbReference>
<dbReference type="GO" id="GO:0005737">
    <property type="term" value="C:cytoplasm"/>
    <property type="evidence" value="ECO:0007669"/>
    <property type="project" value="UniProtKB-SubCell"/>
</dbReference>
<dbReference type="GO" id="GO:0000107">
    <property type="term" value="F:imidazoleglycerol-phosphate synthase activity"/>
    <property type="evidence" value="ECO:0007669"/>
    <property type="project" value="UniProtKB-UniRule"/>
</dbReference>
<dbReference type="GO" id="GO:0016829">
    <property type="term" value="F:lyase activity"/>
    <property type="evidence" value="ECO:0007669"/>
    <property type="project" value="UniProtKB-KW"/>
</dbReference>
<dbReference type="GO" id="GO:0000105">
    <property type="term" value="P:L-histidine biosynthetic process"/>
    <property type="evidence" value="ECO:0007669"/>
    <property type="project" value="UniProtKB-UniRule"/>
</dbReference>
<dbReference type="CDD" id="cd04731">
    <property type="entry name" value="HisF"/>
    <property type="match status" value="1"/>
</dbReference>
<dbReference type="FunFam" id="3.20.20.70:FF:000006">
    <property type="entry name" value="Imidazole glycerol phosphate synthase subunit HisF"/>
    <property type="match status" value="1"/>
</dbReference>
<dbReference type="Gene3D" id="3.20.20.70">
    <property type="entry name" value="Aldolase class I"/>
    <property type="match status" value="1"/>
</dbReference>
<dbReference type="HAMAP" id="MF_01013">
    <property type="entry name" value="HisF"/>
    <property type="match status" value="1"/>
</dbReference>
<dbReference type="InterPro" id="IPR013785">
    <property type="entry name" value="Aldolase_TIM"/>
</dbReference>
<dbReference type="InterPro" id="IPR006062">
    <property type="entry name" value="His_biosynth"/>
</dbReference>
<dbReference type="InterPro" id="IPR004651">
    <property type="entry name" value="HisF"/>
</dbReference>
<dbReference type="InterPro" id="IPR050064">
    <property type="entry name" value="IGPS_HisA/HisF"/>
</dbReference>
<dbReference type="InterPro" id="IPR011060">
    <property type="entry name" value="RibuloseP-bd_barrel"/>
</dbReference>
<dbReference type="NCBIfam" id="TIGR00735">
    <property type="entry name" value="hisF"/>
    <property type="match status" value="1"/>
</dbReference>
<dbReference type="PANTHER" id="PTHR21235:SF2">
    <property type="entry name" value="IMIDAZOLE GLYCEROL PHOSPHATE SYNTHASE HISHF"/>
    <property type="match status" value="1"/>
</dbReference>
<dbReference type="PANTHER" id="PTHR21235">
    <property type="entry name" value="IMIDAZOLE GLYCEROL PHOSPHATE SYNTHASE SUBUNIT HISF/H IGP SYNTHASE SUBUNIT HISF/H"/>
    <property type="match status" value="1"/>
</dbReference>
<dbReference type="Pfam" id="PF00977">
    <property type="entry name" value="His_biosynth"/>
    <property type="match status" value="1"/>
</dbReference>
<dbReference type="SUPFAM" id="SSF51366">
    <property type="entry name" value="Ribulose-phoshate binding barrel"/>
    <property type="match status" value="1"/>
</dbReference>
<keyword id="KW-0028">Amino-acid biosynthesis</keyword>
<keyword id="KW-0963">Cytoplasm</keyword>
<keyword id="KW-0368">Histidine biosynthesis</keyword>
<keyword id="KW-0456">Lyase</keyword>
<keyword id="KW-1185">Reference proteome</keyword>
<organism>
    <name type="scientific">Desulfosudis oleivorans (strain DSM 6200 / JCM 39069 / Hxd3)</name>
    <name type="common">Desulfococcus oleovorans</name>
    <dbReference type="NCBI Taxonomy" id="96561"/>
    <lineage>
        <taxon>Bacteria</taxon>
        <taxon>Pseudomonadati</taxon>
        <taxon>Thermodesulfobacteriota</taxon>
        <taxon>Desulfobacteria</taxon>
        <taxon>Desulfobacterales</taxon>
        <taxon>Desulfosudaceae</taxon>
        <taxon>Desulfosudis</taxon>
    </lineage>
</organism>
<comment type="function">
    <text evidence="1">IGPS catalyzes the conversion of PRFAR and glutamine to IGP, AICAR and glutamate. The HisF subunit catalyzes the cyclization activity that produces IGP and AICAR from PRFAR using the ammonia provided by the HisH subunit.</text>
</comment>
<comment type="catalytic activity">
    <reaction evidence="1">
        <text>5-[(5-phospho-1-deoxy-D-ribulos-1-ylimino)methylamino]-1-(5-phospho-beta-D-ribosyl)imidazole-4-carboxamide + L-glutamine = D-erythro-1-(imidazol-4-yl)glycerol 3-phosphate + 5-amino-1-(5-phospho-beta-D-ribosyl)imidazole-4-carboxamide + L-glutamate + H(+)</text>
        <dbReference type="Rhea" id="RHEA:24793"/>
        <dbReference type="ChEBI" id="CHEBI:15378"/>
        <dbReference type="ChEBI" id="CHEBI:29985"/>
        <dbReference type="ChEBI" id="CHEBI:58278"/>
        <dbReference type="ChEBI" id="CHEBI:58359"/>
        <dbReference type="ChEBI" id="CHEBI:58475"/>
        <dbReference type="ChEBI" id="CHEBI:58525"/>
        <dbReference type="EC" id="4.3.2.10"/>
    </reaction>
</comment>
<comment type="pathway">
    <text evidence="1">Amino-acid biosynthesis; L-histidine biosynthesis; L-histidine from 5-phospho-alpha-D-ribose 1-diphosphate: step 5/9.</text>
</comment>
<comment type="subunit">
    <text evidence="1">Heterodimer of HisH and HisF.</text>
</comment>
<comment type="subcellular location">
    <subcellularLocation>
        <location evidence="1">Cytoplasm</location>
    </subcellularLocation>
</comment>
<comment type="similarity">
    <text evidence="1">Belongs to the HisA/HisF family.</text>
</comment>
<proteinExistence type="inferred from homology"/>
<name>HIS6_DESOH</name>
<sequence length="259" mass="28273">MLTRRIIPCLDVRDGRTTKGIKFENNVDIGDPVEMAKVYYEAGADEIVFYDITASHEKRGLMIDVVRKVAETIFIPFSVGGGIRTVTDMRDTLLAGAEKISVNSSAVQNPAIISEGAEKFGSQCVVLGMDVKRVEKRKEIPSGFEIVINGGRTYMGIDALWWAREAQRLGAGEICLNSIDADGVCRGYDIELTRLISENVTIPVIASGGAGEPVHLHDALTEGRADAALIASMVHYGHHTIGGIKEYLDQRGVPVRMKW</sequence>